<organism>
    <name type="scientific">Acanthamoeba castellanii</name>
    <name type="common">Amoeba</name>
    <dbReference type="NCBI Taxonomy" id="5755"/>
    <lineage>
        <taxon>Eukaryota</taxon>
        <taxon>Amoebozoa</taxon>
        <taxon>Discosea</taxon>
        <taxon>Longamoebia</taxon>
        <taxon>Centramoebida</taxon>
        <taxon>Acanthamoebidae</taxon>
        <taxon>Acanthamoeba</taxon>
    </lineage>
</organism>
<comment type="subcellular location">
    <subcellularLocation>
        <location>Mitochondrion</location>
    </subcellularLocation>
</comment>
<comment type="similarity">
    <text evidence="2">Belongs to the universal ribosomal protein uS4 family.</text>
</comment>
<gene>
    <name type="primary">RPS4</name>
</gene>
<evidence type="ECO:0000255" key="1">
    <source>
        <dbReference type="PROSITE-ProRule" id="PRU00182"/>
    </source>
</evidence>
<evidence type="ECO:0000305" key="2"/>
<geneLocation type="mitochondrion"/>
<feature type="chain" id="PRO_0000132687" description="Small ribosomal subunit protein uS4m">
    <location>
        <begin position="1"/>
        <end position="374"/>
    </location>
</feature>
<feature type="domain" description="S4 RNA-binding" evidence="1">
    <location>
        <begin position="259"/>
        <end position="323"/>
    </location>
</feature>
<keyword id="KW-0496">Mitochondrion</keyword>
<keyword id="KW-0687">Ribonucleoprotein</keyword>
<keyword id="KW-0689">Ribosomal protein</keyword>
<keyword id="KW-0694">RNA-binding</keyword>
<keyword id="KW-0699">rRNA-binding</keyword>
<proteinExistence type="inferred from homology"/>
<protein>
    <recommendedName>
        <fullName evidence="2">Small ribosomal subunit protein uS4m</fullName>
    </recommendedName>
    <alternativeName>
        <fullName>Ribosomal protein S4, mitochondrial</fullName>
    </alternativeName>
</protein>
<dbReference type="EMBL" id="U12386">
    <property type="protein sequence ID" value="AAD11821.1"/>
    <property type="molecule type" value="Genomic_DNA"/>
</dbReference>
<dbReference type="PIR" id="S53829">
    <property type="entry name" value="S53829"/>
</dbReference>
<dbReference type="RefSeq" id="NP_042528.1">
    <property type="nucleotide sequence ID" value="NC_001637.1"/>
</dbReference>
<dbReference type="SMR" id="P46755"/>
<dbReference type="GeneID" id="1734021"/>
<dbReference type="GO" id="GO:0005739">
    <property type="term" value="C:mitochondrion"/>
    <property type="evidence" value="ECO:0007669"/>
    <property type="project" value="UniProtKB-SubCell"/>
</dbReference>
<dbReference type="GO" id="GO:1990904">
    <property type="term" value="C:ribonucleoprotein complex"/>
    <property type="evidence" value="ECO:0007669"/>
    <property type="project" value="UniProtKB-KW"/>
</dbReference>
<dbReference type="GO" id="GO:0005840">
    <property type="term" value="C:ribosome"/>
    <property type="evidence" value="ECO:0007669"/>
    <property type="project" value="UniProtKB-KW"/>
</dbReference>
<dbReference type="GO" id="GO:0019843">
    <property type="term" value="F:rRNA binding"/>
    <property type="evidence" value="ECO:0007669"/>
    <property type="project" value="UniProtKB-KW"/>
</dbReference>
<dbReference type="CDD" id="cd00165">
    <property type="entry name" value="S4"/>
    <property type="match status" value="1"/>
</dbReference>
<dbReference type="Gene3D" id="3.10.290.10">
    <property type="entry name" value="RNA-binding S4 domain"/>
    <property type="match status" value="1"/>
</dbReference>
<dbReference type="InterPro" id="IPR018079">
    <property type="entry name" value="Ribosomal_uS4_CS"/>
</dbReference>
<dbReference type="InterPro" id="IPR002942">
    <property type="entry name" value="S4_RNA-bd"/>
</dbReference>
<dbReference type="InterPro" id="IPR036986">
    <property type="entry name" value="S4_RNA-bd_sf"/>
</dbReference>
<dbReference type="Pfam" id="PF01479">
    <property type="entry name" value="S4"/>
    <property type="match status" value="1"/>
</dbReference>
<dbReference type="SMART" id="SM00363">
    <property type="entry name" value="S4"/>
    <property type="match status" value="1"/>
</dbReference>
<dbReference type="SUPFAM" id="SSF55174">
    <property type="entry name" value="Alpha-L RNA-binding motif"/>
    <property type="match status" value="1"/>
</dbReference>
<dbReference type="PROSITE" id="PS00632">
    <property type="entry name" value="RIBOSOMAL_S4"/>
    <property type="match status" value="1"/>
</dbReference>
<dbReference type="PROSITE" id="PS50889">
    <property type="entry name" value="S4"/>
    <property type="match status" value="1"/>
</dbReference>
<reference key="1">
    <citation type="journal article" date="1995" name="J. Mol. Biol.">
        <title>The mitochondrial DNA of the amoeboid protozoon, Acanthamoeba castellanii: complete sequence, gene content and genome organization.</title>
        <authorList>
            <person name="Burger G."/>
            <person name="Plante I."/>
            <person name="Lonergan K.M."/>
            <person name="Gray M.W."/>
        </authorList>
    </citation>
    <scope>NUCLEOTIDE SEQUENCE [GENOMIC DNA]</scope>
    <source>
        <strain>ATCC 30010 / Neff</strain>
    </source>
</reference>
<accession>P46755</accession>
<name>RT04_ACACA</name>
<sequence>MYKFYKHKLYKKYQDELWGHIISKKSFSYNKKSILLNYRDIILRNRLRIKTKFKYFRRGFLKNLNYTLLLFKFFRKNIRVFSFKRRQSLSVPLSLSSKRFKTKRKVFFKTSKIASLLKFNIFYANTVAFNKVFIKHNYCLSSCSNIYTQTKLLYFPIISVNRGLVFYKSKNFLRVNNLQFVIKKKLNLRKQKIFFYSVHIAAPKKKTKKWSLFALKNIYYKKVSLFFGFRKVVDFFKVYNLAGALAKGNSFAVFLMLEGRLENFLMRLNLFPSIYFIKKFIEYGNVFVNNKIINYTSYHLNFNEIVSFNKKYYKKLYFFIKSKLRQRKVIINAPSFVEVDYKLLVAMLIRNPDELALTKPLSFNLYTKFLSVNR</sequence>